<gene>
    <name evidence="1" type="primary">smpB</name>
    <name type="ordered locus">AHA_1443</name>
</gene>
<organism>
    <name type="scientific">Aeromonas hydrophila subsp. hydrophila (strain ATCC 7966 / DSM 30187 / BCRC 13018 / CCUG 14551 / JCM 1027 / KCTC 2358 / NCIMB 9240 / NCTC 8049)</name>
    <dbReference type="NCBI Taxonomy" id="380703"/>
    <lineage>
        <taxon>Bacteria</taxon>
        <taxon>Pseudomonadati</taxon>
        <taxon>Pseudomonadota</taxon>
        <taxon>Gammaproteobacteria</taxon>
        <taxon>Aeromonadales</taxon>
        <taxon>Aeromonadaceae</taxon>
        <taxon>Aeromonas</taxon>
    </lineage>
</organism>
<evidence type="ECO:0000255" key="1">
    <source>
        <dbReference type="HAMAP-Rule" id="MF_00023"/>
    </source>
</evidence>
<evidence type="ECO:0000256" key="2">
    <source>
        <dbReference type="SAM" id="MobiDB-lite"/>
    </source>
</evidence>
<accession>A0KI80</accession>
<dbReference type="EMBL" id="CP000462">
    <property type="protein sequence ID" value="ABK37313.1"/>
    <property type="molecule type" value="Genomic_DNA"/>
</dbReference>
<dbReference type="RefSeq" id="WP_011705343.1">
    <property type="nucleotide sequence ID" value="NC_008570.1"/>
</dbReference>
<dbReference type="RefSeq" id="YP_855981.1">
    <property type="nucleotide sequence ID" value="NC_008570.1"/>
</dbReference>
<dbReference type="SMR" id="A0KI80"/>
<dbReference type="STRING" id="380703.AHA_1443"/>
<dbReference type="EnsemblBacteria" id="ABK37313">
    <property type="protein sequence ID" value="ABK37313"/>
    <property type="gene ID" value="AHA_1443"/>
</dbReference>
<dbReference type="GeneID" id="4490629"/>
<dbReference type="KEGG" id="aha:AHA_1443"/>
<dbReference type="PATRIC" id="fig|380703.7.peg.1450"/>
<dbReference type="eggNOG" id="COG0691">
    <property type="taxonomic scope" value="Bacteria"/>
</dbReference>
<dbReference type="HOGENOM" id="CLU_108953_3_0_6"/>
<dbReference type="OrthoDB" id="9805462at2"/>
<dbReference type="Proteomes" id="UP000000756">
    <property type="component" value="Chromosome"/>
</dbReference>
<dbReference type="GO" id="GO:0005829">
    <property type="term" value="C:cytosol"/>
    <property type="evidence" value="ECO:0007669"/>
    <property type="project" value="TreeGrafter"/>
</dbReference>
<dbReference type="GO" id="GO:0003723">
    <property type="term" value="F:RNA binding"/>
    <property type="evidence" value="ECO:0007669"/>
    <property type="project" value="UniProtKB-UniRule"/>
</dbReference>
<dbReference type="GO" id="GO:0070929">
    <property type="term" value="P:trans-translation"/>
    <property type="evidence" value="ECO:0007669"/>
    <property type="project" value="UniProtKB-UniRule"/>
</dbReference>
<dbReference type="CDD" id="cd09294">
    <property type="entry name" value="SmpB"/>
    <property type="match status" value="1"/>
</dbReference>
<dbReference type="Gene3D" id="2.40.280.10">
    <property type="match status" value="1"/>
</dbReference>
<dbReference type="HAMAP" id="MF_00023">
    <property type="entry name" value="SmpB"/>
    <property type="match status" value="1"/>
</dbReference>
<dbReference type="InterPro" id="IPR023620">
    <property type="entry name" value="SmpB"/>
</dbReference>
<dbReference type="InterPro" id="IPR000037">
    <property type="entry name" value="SsrA-bd_prot"/>
</dbReference>
<dbReference type="InterPro" id="IPR020081">
    <property type="entry name" value="SsrA-bd_prot_CS"/>
</dbReference>
<dbReference type="NCBIfam" id="NF003843">
    <property type="entry name" value="PRK05422.1"/>
    <property type="match status" value="1"/>
</dbReference>
<dbReference type="NCBIfam" id="TIGR00086">
    <property type="entry name" value="smpB"/>
    <property type="match status" value="1"/>
</dbReference>
<dbReference type="PANTHER" id="PTHR30308:SF2">
    <property type="entry name" value="SSRA-BINDING PROTEIN"/>
    <property type="match status" value="1"/>
</dbReference>
<dbReference type="PANTHER" id="PTHR30308">
    <property type="entry name" value="TMRNA-BINDING COMPONENT OF TRANS-TRANSLATION TAGGING COMPLEX"/>
    <property type="match status" value="1"/>
</dbReference>
<dbReference type="Pfam" id="PF01668">
    <property type="entry name" value="SmpB"/>
    <property type="match status" value="1"/>
</dbReference>
<dbReference type="SUPFAM" id="SSF74982">
    <property type="entry name" value="Small protein B (SmpB)"/>
    <property type="match status" value="1"/>
</dbReference>
<dbReference type="PROSITE" id="PS01317">
    <property type="entry name" value="SSRP"/>
    <property type="match status" value="1"/>
</dbReference>
<sequence>MSKKNSKNKAGSNTIALNRSARHEYFIEEKIEAGLSLQGWEVKSLRAGKANISEAYVIFRDGEAYLFGSSFLPLQAASSHVVCDPTRTRKLLLSRRELDKLESLIARQGYTVVPLALYWKQCWVKVEIGLVKGKKEHDKREDTKAREWDREKARIMKNKHRG</sequence>
<protein>
    <recommendedName>
        <fullName evidence="1">SsrA-binding protein</fullName>
    </recommendedName>
    <alternativeName>
        <fullName evidence="1">Small protein B</fullName>
    </alternativeName>
</protein>
<comment type="function">
    <text evidence="1">Required for rescue of stalled ribosomes mediated by trans-translation. Binds to transfer-messenger RNA (tmRNA), required for stable association of tmRNA with ribosomes. tmRNA and SmpB together mimic tRNA shape, replacing the anticodon stem-loop with SmpB. tmRNA is encoded by the ssrA gene; the 2 termini fold to resemble tRNA(Ala) and it encodes a 'tag peptide', a short internal open reading frame. During trans-translation Ala-aminoacylated tmRNA acts like a tRNA, entering the A-site of stalled ribosomes, displacing the stalled mRNA. The ribosome then switches to translate the ORF on the tmRNA; the nascent peptide is terminated with the 'tag peptide' encoded by the tmRNA and targeted for degradation. The ribosome is freed to recommence translation, which seems to be the essential function of trans-translation.</text>
</comment>
<comment type="subcellular location">
    <subcellularLocation>
        <location evidence="1">Cytoplasm</location>
    </subcellularLocation>
    <text evidence="1">The tmRNA-SmpB complex associates with stalled 70S ribosomes.</text>
</comment>
<comment type="similarity">
    <text evidence="1">Belongs to the SmpB family.</text>
</comment>
<reference key="1">
    <citation type="journal article" date="2006" name="J. Bacteriol.">
        <title>Genome sequence of Aeromonas hydrophila ATCC 7966T: jack of all trades.</title>
        <authorList>
            <person name="Seshadri R."/>
            <person name="Joseph S.W."/>
            <person name="Chopra A.K."/>
            <person name="Sha J."/>
            <person name="Shaw J."/>
            <person name="Graf J."/>
            <person name="Haft D.H."/>
            <person name="Wu M."/>
            <person name="Ren Q."/>
            <person name="Rosovitz M.J."/>
            <person name="Madupu R."/>
            <person name="Tallon L."/>
            <person name="Kim M."/>
            <person name="Jin S."/>
            <person name="Vuong H."/>
            <person name="Stine O.C."/>
            <person name="Ali A."/>
            <person name="Horneman A.J."/>
            <person name="Heidelberg J.F."/>
        </authorList>
    </citation>
    <scope>NUCLEOTIDE SEQUENCE [LARGE SCALE GENOMIC DNA]</scope>
    <source>
        <strain>ATCC 7966 / DSM 30187 / BCRC 13018 / CCUG 14551 / JCM 1027 / KCTC 2358 / NCIMB 9240 / NCTC 8049</strain>
    </source>
</reference>
<name>SSRP_AERHH</name>
<keyword id="KW-0963">Cytoplasm</keyword>
<keyword id="KW-1185">Reference proteome</keyword>
<keyword id="KW-0694">RNA-binding</keyword>
<feature type="chain" id="PRO_0000331015" description="SsrA-binding protein">
    <location>
        <begin position="1"/>
        <end position="162"/>
    </location>
</feature>
<feature type="region of interest" description="Disordered" evidence="2">
    <location>
        <begin position="137"/>
        <end position="162"/>
    </location>
</feature>
<feature type="compositionally biased region" description="Basic and acidic residues" evidence="2">
    <location>
        <begin position="137"/>
        <end position="154"/>
    </location>
</feature>
<proteinExistence type="inferred from homology"/>